<protein>
    <recommendedName>
        <fullName>E3 ubiquitin-protein ligase UHRF2</fullName>
        <ecNumber evidence="20">2.3.2.27</ecNumber>
    </recommendedName>
    <alternativeName>
        <fullName>Np95/ICBP90-like RING finger protein</fullName>
        <shortName>Np95-like RING finger protein</shortName>
    </alternativeName>
    <alternativeName>
        <fullName>Nuclear protein 97</fullName>
    </alternativeName>
    <alternativeName>
        <fullName>Nuclear zinc finger protein Np97</fullName>
    </alternativeName>
    <alternativeName>
        <fullName>RING finger protein 107</fullName>
    </alternativeName>
    <alternativeName>
        <fullName>RING-type E3 ubiquitin transferase UHRF2</fullName>
    </alternativeName>
    <alternativeName>
        <fullName>Ubiquitin-like PHD and RING finger domain-containing protein 2</fullName>
    </alternativeName>
    <alternativeName>
        <fullName>Ubiquitin-like-containing PHD and RING finger domains protein 2</fullName>
    </alternativeName>
</protein>
<organism>
    <name type="scientific">Homo sapiens</name>
    <name type="common">Human</name>
    <dbReference type="NCBI Taxonomy" id="9606"/>
    <lineage>
        <taxon>Eukaryota</taxon>
        <taxon>Metazoa</taxon>
        <taxon>Chordata</taxon>
        <taxon>Craniata</taxon>
        <taxon>Vertebrata</taxon>
        <taxon>Euteleostomi</taxon>
        <taxon>Mammalia</taxon>
        <taxon>Eutheria</taxon>
        <taxon>Euarchontoglires</taxon>
        <taxon>Primates</taxon>
        <taxon>Haplorrhini</taxon>
        <taxon>Catarrhini</taxon>
        <taxon>Hominidae</taxon>
        <taxon>Homo</taxon>
    </lineage>
</organism>
<evidence type="ECO:0000250" key="1"/>
<evidence type="ECO:0000250" key="2">
    <source>
        <dbReference type="UniProtKB" id="Q7TMI3"/>
    </source>
</evidence>
<evidence type="ECO:0000255" key="3">
    <source>
        <dbReference type="PROSITE-ProRule" id="PRU00146"/>
    </source>
</evidence>
<evidence type="ECO:0000255" key="4">
    <source>
        <dbReference type="PROSITE-ProRule" id="PRU00175"/>
    </source>
</evidence>
<evidence type="ECO:0000255" key="5">
    <source>
        <dbReference type="PROSITE-ProRule" id="PRU00214"/>
    </source>
</evidence>
<evidence type="ECO:0000255" key="6">
    <source>
        <dbReference type="PROSITE-ProRule" id="PRU00358"/>
    </source>
</evidence>
<evidence type="ECO:0000256" key="7">
    <source>
        <dbReference type="SAM" id="MobiDB-lite"/>
    </source>
</evidence>
<evidence type="ECO:0000269" key="8">
    <source>
    </source>
</evidence>
<evidence type="ECO:0000269" key="9">
    <source>
    </source>
</evidence>
<evidence type="ECO:0000269" key="10">
    <source>
    </source>
</evidence>
<evidence type="ECO:0000269" key="11">
    <source>
    </source>
</evidence>
<evidence type="ECO:0000269" key="12">
    <source>
    </source>
</evidence>
<evidence type="ECO:0000269" key="13">
    <source>
    </source>
</evidence>
<evidence type="ECO:0000269" key="14">
    <source>
    </source>
</evidence>
<evidence type="ECO:0000269" key="15">
    <source>
    </source>
</evidence>
<evidence type="ECO:0000269" key="16">
    <source>
    </source>
</evidence>
<evidence type="ECO:0000269" key="17">
    <source>
    </source>
</evidence>
<evidence type="ECO:0000269" key="18">
    <source>
    </source>
</evidence>
<evidence type="ECO:0000269" key="19">
    <source>
    </source>
</evidence>
<evidence type="ECO:0000269" key="20">
    <source>
    </source>
</evidence>
<evidence type="ECO:0000269" key="21">
    <source>
    </source>
</evidence>
<evidence type="ECO:0000269" key="22">
    <source>
    </source>
</evidence>
<evidence type="ECO:0000269" key="23">
    <source ref="21"/>
</evidence>
<evidence type="ECO:0000269" key="24">
    <source ref="22"/>
</evidence>
<evidence type="ECO:0000303" key="25">
    <source>
    </source>
</evidence>
<evidence type="ECO:0000305" key="26"/>
<evidence type="ECO:0007744" key="27">
    <source>
        <dbReference type="PDB" id="4PW5"/>
    </source>
</evidence>
<evidence type="ECO:0007744" key="28">
    <source>
        <dbReference type="PDB" id="4PW6"/>
    </source>
</evidence>
<evidence type="ECO:0007744" key="29">
    <source>
        <dbReference type="PDB" id="4PW7"/>
    </source>
</evidence>
<evidence type="ECO:0007744" key="30">
    <source>
        <dbReference type="PDB" id="5YCO"/>
    </source>
</evidence>
<evidence type="ECO:0007744" key="31">
    <source>
    </source>
</evidence>
<evidence type="ECO:0007829" key="32">
    <source>
        <dbReference type="PDB" id="1WY8"/>
    </source>
</evidence>
<evidence type="ECO:0007829" key="33">
    <source>
        <dbReference type="PDB" id="1Z6U"/>
    </source>
</evidence>
<evidence type="ECO:0007829" key="34">
    <source>
        <dbReference type="PDB" id="4PW7"/>
    </source>
</evidence>
<evidence type="ECO:0007829" key="35">
    <source>
        <dbReference type="PDB" id="4TVR"/>
    </source>
</evidence>
<proteinExistence type="evidence at protein level"/>
<dbReference type="EC" id="2.3.2.27" evidence="20"/>
<dbReference type="EMBL" id="AB071698">
    <property type="protein sequence ID" value="BAB68317.1"/>
    <property type="molecule type" value="mRNA"/>
</dbReference>
<dbReference type="EMBL" id="AF274049">
    <property type="protein sequence ID" value="AAM33799.1"/>
    <property type="molecule type" value="mRNA"/>
</dbReference>
<dbReference type="EMBL" id="AL133480">
    <property type="status" value="NOT_ANNOTATED_CDS"/>
    <property type="molecule type" value="Genomic_DNA"/>
</dbReference>
<dbReference type="EMBL" id="AL353718">
    <property type="status" value="NOT_ANNOTATED_CDS"/>
    <property type="molecule type" value="Genomic_DNA"/>
</dbReference>
<dbReference type="EMBL" id="BC028397">
    <property type="protein sequence ID" value="AAH28397.1"/>
    <property type="molecule type" value="mRNA"/>
</dbReference>
<dbReference type="EMBL" id="AL137728">
    <property type="protein sequence ID" value="CAH56383.1"/>
    <property type="molecule type" value="mRNA"/>
</dbReference>
<dbReference type="CCDS" id="CCDS6469.1">
    <molecule id="Q96PU4-1"/>
</dbReference>
<dbReference type="RefSeq" id="NP_690856.1">
    <molecule id="Q96PU4-1"/>
    <property type="nucleotide sequence ID" value="NM_152896.3"/>
</dbReference>
<dbReference type="PDB" id="1WY8">
    <property type="method" value="NMR"/>
    <property type="chains" value="A=1-76"/>
</dbReference>
<dbReference type="PDB" id="1Z6U">
    <property type="method" value="X-ray"/>
    <property type="resolution" value="2.10 A"/>
    <property type="chains" value="A/B=672-802"/>
</dbReference>
<dbReference type="PDB" id="2E6S">
    <property type="method" value="NMR"/>
    <property type="chains" value="A=326-395"/>
</dbReference>
<dbReference type="PDB" id="3OLN">
    <property type="method" value="X-ray"/>
    <property type="resolution" value="2.30 A"/>
    <property type="chains" value="A/B=419-648"/>
</dbReference>
<dbReference type="PDB" id="4PW5">
    <property type="method" value="X-ray"/>
    <property type="resolution" value="2.20 A"/>
    <property type="chains" value="A/B/E/F=419-648"/>
</dbReference>
<dbReference type="PDB" id="4PW6">
    <property type="method" value="X-ray"/>
    <property type="resolution" value="3.79 A"/>
    <property type="chains" value="A/B=419-648"/>
</dbReference>
<dbReference type="PDB" id="4PW7">
    <property type="method" value="X-ray"/>
    <property type="resolution" value="2.00 A"/>
    <property type="chains" value="A/B/E/F=419-648"/>
</dbReference>
<dbReference type="PDB" id="4TVR">
    <property type="method" value="X-ray"/>
    <property type="resolution" value="2.29 A"/>
    <property type="chains" value="A=109-395"/>
</dbReference>
<dbReference type="PDB" id="5YCO">
    <property type="method" value="X-ray"/>
    <property type="resolution" value="2.20 A"/>
    <property type="chains" value="E/F=784-800"/>
</dbReference>
<dbReference type="PDBsum" id="1WY8"/>
<dbReference type="PDBsum" id="1Z6U"/>
<dbReference type="PDBsum" id="2E6S"/>
<dbReference type="PDBsum" id="3OLN"/>
<dbReference type="PDBsum" id="4PW5"/>
<dbReference type="PDBsum" id="4PW6"/>
<dbReference type="PDBsum" id="4PW7"/>
<dbReference type="PDBsum" id="4TVR"/>
<dbReference type="PDBsum" id="5YCO"/>
<dbReference type="BMRB" id="Q96PU4"/>
<dbReference type="SMR" id="Q96PU4"/>
<dbReference type="BioGRID" id="125434">
    <property type="interactions" value="134"/>
</dbReference>
<dbReference type="FunCoup" id="Q96PU4">
    <property type="interactions" value="3515"/>
</dbReference>
<dbReference type="IntAct" id="Q96PU4">
    <property type="interactions" value="43"/>
</dbReference>
<dbReference type="MINT" id="Q96PU4"/>
<dbReference type="STRING" id="9606.ENSP00000276893"/>
<dbReference type="GlyGen" id="Q96PU4">
    <property type="glycosylation" value="1 site, 1 O-linked glycan (1 site)"/>
</dbReference>
<dbReference type="iPTMnet" id="Q96PU4"/>
<dbReference type="PhosphoSitePlus" id="Q96PU4"/>
<dbReference type="SwissPalm" id="Q96PU4"/>
<dbReference type="BioMuta" id="UHRF2"/>
<dbReference type="DMDM" id="67462076"/>
<dbReference type="jPOST" id="Q96PU4"/>
<dbReference type="MassIVE" id="Q96PU4"/>
<dbReference type="PaxDb" id="9606-ENSP00000276893"/>
<dbReference type="PeptideAtlas" id="Q96PU4"/>
<dbReference type="ProteomicsDB" id="77750">
    <molecule id="Q96PU4-1"/>
</dbReference>
<dbReference type="ProteomicsDB" id="77751">
    <molecule id="Q96PU4-2"/>
</dbReference>
<dbReference type="Pumba" id="Q96PU4"/>
<dbReference type="Antibodypedia" id="9697">
    <property type="antibodies" value="313 antibodies from 30 providers"/>
</dbReference>
<dbReference type="DNASU" id="115426"/>
<dbReference type="Ensembl" id="ENST00000276893.10">
    <molecule id="Q96PU4-1"/>
    <property type="protein sequence ID" value="ENSP00000276893.5"/>
    <property type="gene ID" value="ENSG00000147854.18"/>
</dbReference>
<dbReference type="Ensembl" id="ENST00000468435.7">
    <molecule id="Q96PU4-2"/>
    <property type="protein sequence ID" value="ENSP00000434182.1"/>
    <property type="gene ID" value="ENSG00000147854.18"/>
</dbReference>
<dbReference type="GeneID" id="115426"/>
<dbReference type="KEGG" id="hsa:115426"/>
<dbReference type="MANE-Select" id="ENST00000276893.10">
    <property type="protein sequence ID" value="ENSP00000276893.5"/>
    <property type="RefSeq nucleotide sequence ID" value="NM_152896.3"/>
    <property type="RefSeq protein sequence ID" value="NP_690856.1"/>
</dbReference>
<dbReference type="UCSC" id="uc003zjy.4">
    <molecule id="Q96PU4-1"/>
    <property type="organism name" value="human"/>
</dbReference>
<dbReference type="AGR" id="HGNC:12557"/>
<dbReference type="CTD" id="115426"/>
<dbReference type="DisGeNET" id="115426"/>
<dbReference type="GeneCards" id="UHRF2"/>
<dbReference type="HGNC" id="HGNC:12557">
    <property type="gene designation" value="UHRF2"/>
</dbReference>
<dbReference type="HPA" id="ENSG00000147854">
    <property type="expression patterns" value="Low tissue specificity"/>
</dbReference>
<dbReference type="MIM" id="615211">
    <property type="type" value="gene"/>
</dbReference>
<dbReference type="neXtProt" id="NX_Q96PU4"/>
<dbReference type="OpenTargets" id="ENSG00000147854"/>
<dbReference type="PharmGKB" id="PA37197"/>
<dbReference type="VEuPathDB" id="HostDB:ENSG00000147854"/>
<dbReference type="eggNOG" id="ENOG502QRDQ">
    <property type="taxonomic scope" value="Eukaryota"/>
</dbReference>
<dbReference type="GeneTree" id="ENSGT00390000008296"/>
<dbReference type="HOGENOM" id="CLU_022357_0_0_1"/>
<dbReference type="InParanoid" id="Q96PU4"/>
<dbReference type="OMA" id="CHMCSCH"/>
<dbReference type="OrthoDB" id="2270193at2759"/>
<dbReference type="PAN-GO" id="Q96PU4">
    <property type="GO annotations" value="3 GO annotations based on evolutionary models"/>
</dbReference>
<dbReference type="PhylomeDB" id="Q96PU4"/>
<dbReference type="TreeFam" id="TF106434"/>
<dbReference type="PathwayCommons" id="Q96PU4"/>
<dbReference type="Reactome" id="R-HSA-3899300">
    <property type="pathway name" value="SUMOylation of transcription cofactors"/>
</dbReference>
<dbReference type="SignaLink" id="Q96PU4"/>
<dbReference type="SIGNOR" id="Q96PU4"/>
<dbReference type="UniPathway" id="UPA00143"/>
<dbReference type="BioGRID-ORCS" id="115426">
    <property type="hits" value="10 hits in 1212 CRISPR screens"/>
</dbReference>
<dbReference type="CD-CODE" id="91857CE7">
    <property type="entry name" value="Nucleolus"/>
</dbReference>
<dbReference type="ChiTaRS" id="UHRF2">
    <property type="organism name" value="human"/>
</dbReference>
<dbReference type="EvolutionaryTrace" id="Q96PU4"/>
<dbReference type="GeneWiki" id="UHRF2"/>
<dbReference type="GenomeRNAi" id="115426"/>
<dbReference type="Pharos" id="Q96PU4">
    <property type="development level" value="Tbio"/>
</dbReference>
<dbReference type="PRO" id="PR:Q96PU4"/>
<dbReference type="Proteomes" id="UP000005640">
    <property type="component" value="Chromosome 9"/>
</dbReference>
<dbReference type="RNAct" id="Q96PU4">
    <property type="molecule type" value="protein"/>
</dbReference>
<dbReference type="Bgee" id="ENSG00000147854">
    <property type="expression patterns" value="Expressed in secondary oocyte and 190 other cell types or tissues"/>
</dbReference>
<dbReference type="ExpressionAtlas" id="Q96PU4">
    <property type="expression patterns" value="baseline and differential"/>
</dbReference>
<dbReference type="GO" id="GO:0000792">
    <property type="term" value="C:heterochromatin"/>
    <property type="evidence" value="ECO:0000250"/>
    <property type="project" value="UniProtKB"/>
</dbReference>
<dbReference type="GO" id="GO:0005654">
    <property type="term" value="C:nucleoplasm"/>
    <property type="evidence" value="ECO:0000314"/>
    <property type="project" value="HPA"/>
</dbReference>
<dbReference type="GO" id="GO:0005634">
    <property type="term" value="C:nucleus"/>
    <property type="evidence" value="ECO:0000314"/>
    <property type="project" value="HGNC-UCL"/>
</dbReference>
<dbReference type="GO" id="GO:0005721">
    <property type="term" value="C:pericentric heterochromatin"/>
    <property type="evidence" value="ECO:0000314"/>
    <property type="project" value="ARUK-UCL"/>
</dbReference>
<dbReference type="GO" id="GO:0003677">
    <property type="term" value="F:DNA binding"/>
    <property type="evidence" value="ECO:0007669"/>
    <property type="project" value="UniProtKB-KW"/>
</dbReference>
<dbReference type="GO" id="GO:0042393">
    <property type="term" value="F:histone binding"/>
    <property type="evidence" value="ECO:0000250"/>
    <property type="project" value="UniProtKB"/>
</dbReference>
<dbReference type="GO" id="GO:0062072">
    <property type="term" value="F:histone H3K9me2/3 reader activity"/>
    <property type="evidence" value="ECO:0000304"/>
    <property type="project" value="ARUK-UCL"/>
</dbReference>
<dbReference type="GO" id="GO:0061629">
    <property type="term" value="F:RNA polymerase II-specific DNA-binding transcription factor binding"/>
    <property type="evidence" value="ECO:0000353"/>
    <property type="project" value="ARUK-UCL"/>
</dbReference>
<dbReference type="GO" id="GO:0019789">
    <property type="term" value="F:SUMO transferase activity"/>
    <property type="evidence" value="ECO:0000269"/>
    <property type="project" value="Reactome"/>
</dbReference>
<dbReference type="GO" id="GO:0061630">
    <property type="term" value="F:ubiquitin protein ligase activity"/>
    <property type="evidence" value="ECO:0000314"/>
    <property type="project" value="MGI"/>
</dbReference>
<dbReference type="GO" id="GO:0004842">
    <property type="term" value="F:ubiquitin-protein transferase activity"/>
    <property type="evidence" value="ECO:0000314"/>
    <property type="project" value="HGNC-UCL"/>
</dbReference>
<dbReference type="GO" id="GO:0008270">
    <property type="term" value="F:zinc ion binding"/>
    <property type="evidence" value="ECO:0007669"/>
    <property type="project" value="UniProtKB-KW"/>
</dbReference>
<dbReference type="GO" id="GO:0030154">
    <property type="term" value="P:cell differentiation"/>
    <property type="evidence" value="ECO:0000270"/>
    <property type="project" value="HGNC-UCL"/>
</dbReference>
<dbReference type="GO" id="GO:0044027">
    <property type="term" value="P:negative regulation of gene expression via chromosomal CpG island methylation"/>
    <property type="evidence" value="ECO:0000318"/>
    <property type="project" value="GO_Central"/>
</dbReference>
<dbReference type="GO" id="GO:0051865">
    <property type="term" value="P:protein autoubiquitination"/>
    <property type="evidence" value="ECO:0000314"/>
    <property type="project" value="HGNC-UCL"/>
</dbReference>
<dbReference type="GO" id="GO:0016925">
    <property type="term" value="P:protein sumoylation"/>
    <property type="evidence" value="ECO:0000304"/>
    <property type="project" value="Reactome"/>
</dbReference>
<dbReference type="GO" id="GO:0016567">
    <property type="term" value="P:protein ubiquitination"/>
    <property type="evidence" value="ECO:0000314"/>
    <property type="project" value="HGNC-UCL"/>
</dbReference>
<dbReference type="GO" id="GO:0051726">
    <property type="term" value="P:regulation of cell cycle"/>
    <property type="evidence" value="ECO:0000314"/>
    <property type="project" value="UniProtKB"/>
</dbReference>
<dbReference type="GO" id="GO:0006357">
    <property type="term" value="P:regulation of transcription by RNA polymerase II"/>
    <property type="evidence" value="ECO:0000303"/>
    <property type="project" value="ARUK-UCL"/>
</dbReference>
<dbReference type="CDD" id="cd15617">
    <property type="entry name" value="PHD_UHRF2"/>
    <property type="match status" value="1"/>
</dbReference>
<dbReference type="CDD" id="cd16770">
    <property type="entry name" value="RING-HC_UHRF2"/>
    <property type="match status" value="1"/>
</dbReference>
<dbReference type="CDD" id="cd20456">
    <property type="entry name" value="Tudor_UHRF2_rpt1"/>
    <property type="match status" value="1"/>
</dbReference>
<dbReference type="CDD" id="cd20458">
    <property type="entry name" value="Tudor_UHRF2_rpt2"/>
    <property type="match status" value="1"/>
</dbReference>
<dbReference type="CDD" id="cd17123">
    <property type="entry name" value="Ubl_UHRF2"/>
    <property type="match status" value="1"/>
</dbReference>
<dbReference type="FunFam" id="2.30.280.10:FF:000001">
    <property type="entry name" value="E3 ubiquitin-protein ligase UHRF1 isoform 1"/>
    <property type="match status" value="1"/>
</dbReference>
<dbReference type="FunFam" id="2.30.30.30:FF:000142">
    <property type="entry name" value="E3 ubiquitin-protein ligase UHRF2"/>
    <property type="match status" value="1"/>
</dbReference>
<dbReference type="FunFam" id="2.30.30.1150:FF:000001">
    <property type="entry name" value="E3 ubiquitin-protein ligase UHRF2 isoform X1"/>
    <property type="match status" value="1"/>
</dbReference>
<dbReference type="FunFam" id="3.10.20.90:FF:000165">
    <property type="entry name" value="E3 ubiquitin-protein ligase UHRF2 isoform X1"/>
    <property type="match status" value="1"/>
</dbReference>
<dbReference type="FunFam" id="3.30.40.10:FF:000066">
    <property type="entry name" value="E3 ubiquitin-protein ligase UHRF2 isoform X1"/>
    <property type="match status" value="1"/>
</dbReference>
<dbReference type="Gene3D" id="2.30.30.1150">
    <property type="match status" value="1"/>
</dbReference>
<dbReference type="Gene3D" id="2.30.30.140">
    <property type="match status" value="1"/>
</dbReference>
<dbReference type="Gene3D" id="3.10.20.90">
    <property type="entry name" value="Phosphatidylinositol 3-kinase Catalytic Subunit, Chain A, domain 1"/>
    <property type="match status" value="1"/>
</dbReference>
<dbReference type="Gene3D" id="2.30.280.10">
    <property type="entry name" value="SRA-YDG"/>
    <property type="match status" value="1"/>
</dbReference>
<dbReference type="Gene3D" id="3.30.40.10">
    <property type="entry name" value="Zinc/RING finger domain, C3HC4 (zinc finger)"/>
    <property type="match status" value="1"/>
</dbReference>
<dbReference type="InterPro" id="IPR047467">
    <property type="entry name" value="PHD_UHRF2"/>
</dbReference>
<dbReference type="InterPro" id="IPR015947">
    <property type="entry name" value="PUA-like_sf"/>
</dbReference>
<dbReference type="InterPro" id="IPR047466">
    <property type="entry name" value="RING-HC_UHRF2"/>
</dbReference>
<dbReference type="InterPro" id="IPR036987">
    <property type="entry name" value="SRA-YDG_sf"/>
</dbReference>
<dbReference type="InterPro" id="IPR003105">
    <property type="entry name" value="SRA_YDG"/>
</dbReference>
<dbReference type="InterPro" id="IPR021991">
    <property type="entry name" value="TTD_dom"/>
</dbReference>
<dbReference type="InterPro" id="IPR047407">
    <property type="entry name" value="Tudor_UHRF2_rpt1"/>
</dbReference>
<dbReference type="InterPro" id="IPR000626">
    <property type="entry name" value="Ubiquitin-like_dom"/>
</dbReference>
<dbReference type="InterPro" id="IPR029071">
    <property type="entry name" value="Ubiquitin-like_domsf"/>
</dbReference>
<dbReference type="InterPro" id="IPR047468">
    <property type="entry name" value="Ubl_UHRF2"/>
</dbReference>
<dbReference type="InterPro" id="IPR045134">
    <property type="entry name" value="UHRF1/2-like"/>
</dbReference>
<dbReference type="InterPro" id="IPR011011">
    <property type="entry name" value="Znf_FYVE_PHD"/>
</dbReference>
<dbReference type="InterPro" id="IPR001965">
    <property type="entry name" value="Znf_PHD"/>
</dbReference>
<dbReference type="InterPro" id="IPR019787">
    <property type="entry name" value="Znf_PHD-finger"/>
</dbReference>
<dbReference type="InterPro" id="IPR001841">
    <property type="entry name" value="Znf_RING"/>
</dbReference>
<dbReference type="InterPro" id="IPR013083">
    <property type="entry name" value="Znf_RING/FYVE/PHD"/>
</dbReference>
<dbReference type="InterPro" id="IPR017907">
    <property type="entry name" value="Znf_RING_CS"/>
</dbReference>
<dbReference type="PANTHER" id="PTHR14140">
    <property type="entry name" value="E3 UBIQUITIN-PROTEIN LIGASE UHRF-RELATED"/>
    <property type="match status" value="1"/>
</dbReference>
<dbReference type="PANTHER" id="PTHR14140:SF3">
    <property type="entry name" value="E3 UBIQUITIN-PROTEIN LIGASE UHRF2"/>
    <property type="match status" value="1"/>
</dbReference>
<dbReference type="Pfam" id="PF00628">
    <property type="entry name" value="PHD"/>
    <property type="match status" value="1"/>
</dbReference>
<dbReference type="Pfam" id="PF02182">
    <property type="entry name" value="SAD_SRA"/>
    <property type="match status" value="1"/>
</dbReference>
<dbReference type="Pfam" id="PF12148">
    <property type="entry name" value="TTD"/>
    <property type="match status" value="1"/>
</dbReference>
<dbReference type="Pfam" id="PF00240">
    <property type="entry name" value="ubiquitin"/>
    <property type="match status" value="1"/>
</dbReference>
<dbReference type="SMART" id="SM00249">
    <property type="entry name" value="PHD"/>
    <property type="match status" value="1"/>
</dbReference>
<dbReference type="SMART" id="SM00184">
    <property type="entry name" value="RING"/>
    <property type="match status" value="2"/>
</dbReference>
<dbReference type="SMART" id="SM00466">
    <property type="entry name" value="SRA"/>
    <property type="match status" value="1"/>
</dbReference>
<dbReference type="SMART" id="SM00213">
    <property type="entry name" value="UBQ"/>
    <property type="match status" value="1"/>
</dbReference>
<dbReference type="SUPFAM" id="SSF57903">
    <property type="entry name" value="FYVE/PHD zinc finger"/>
    <property type="match status" value="1"/>
</dbReference>
<dbReference type="SUPFAM" id="SSF88697">
    <property type="entry name" value="PUA domain-like"/>
    <property type="match status" value="1"/>
</dbReference>
<dbReference type="SUPFAM" id="SSF57850">
    <property type="entry name" value="RING/U-box"/>
    <property type="match status" value="1"/>
</dbReference>
<dbReference type="SUPFAM" id="SSF54236">
    <property type="entry name" value="Ubiquitin-like"/>
    <property type="match status" value="1"/>
</dbReference>
<dbReference type="PROSITE" id="PS50053">
    <property type="entry name" value="UBIQUITIN_2"/>
    <property type="match status" value="1"/>
</dbReference>
<dbReference type="PROSITE" id="PS51015">
    <property type="entry name" value="YDG"/>
    <property type="match status" value="1"/>
</dbReference>
<dbReference type="PROSITE" id="PS01359">
    <property type="entry name" value="ZF_PHD_1"/>
    <property type="match status" value="1"/>
</dbReference>
<dbReference type="PROSITE" id="PS50016">
    <property type="entry name" value="ZF_PHD_2"/>
    <property type="match status" value="1"/>
</dbReference>
<dbReference type="PROSITE" id="PS00518">
    <property type="entry name" value="ZF_RING_1"/>
    <property type="match status" value="1"/>
</dbReference>
<dbReference type="PROSITE" id="PS50089">
    <property type="entry name" value="ZF_RING_2"/>
    <property type="match status" value="1"/>
</dbReference>
<keyword id="KW-0002">3D-structure</keyword>
<keyword id="KW-0025">Alternative splicing</keyword>
<keyword id="KW-0131">Cell cycle</keyword>
<keyword id="KW-0158">Chromosome</keyword>
<keyword id="KW-1015">Disulfide bond</keyword>
<keyword id="KW-0238">DNA-binding</keyword>
<keyword id="KW-0479">Metal-binding</keyword>
<keyword id="KW-0539">Nucleus</keyword>
<keyword id="KW-0597">Phosphoprotein</keyword>
<keyword id="KW-1267">Proteomics identification</keyword>
<keyword id="KW-1185">Reference proteome</keyword>
<keyword id="KW-0808">Transferase</keyword>
<keyword id="KW-0832">Ubl conjugation</keyword>
<keyword id="KW-0833">Ubl conjugation pathway</keyword>
<keyword id="KW-0862">Zinc</keyword>
<keyword id="KW-0863">Zinc-finger</keyword>
<reference key="1">
    <citation type="journal article" date="2002" name="Biochem. Biophys. Res. Commun.">
        <title>NIRF, a novel RING finger protein, is involved in cell-cycle regulation.</title>
        <authorList>
            <person name="Mori T."/>
            <person name="Li Y."/>
            <person name="Hata H."/>
            <person name="Ono K."/>
            <person name="Kochi H."/>
        </authorList>
    </citation>
    <scope>NUCLEOTIDE SEQUENCE [MRNA] (ISOFORM 1)</scope>
    <scope>SUBCELLULAR LOCATION</scope>
    <scope>INDUCTION</scope>
    <scope>FUNCTION</scope>
    <scope>INTERACTION WITH PCNP</scope>
    <source>
        <tissue>Fetal brain</tissue>
    </source>
</reference>
<reference key="2">
    <citation type="submission" date="2000-06" db="EMBL/GenBank/DDBJ databases">
        <title>LMO2-induced T cell leukemias overexpress a novel gene, Uhr1, containing RING and PHD zinc fingers and an ubiquitin-like domain.</title>
        <authorList>
            <person name="Davenport J.W."/>
            <person name="Fernandes E.R."/>
            <person name="Neale G.A.M."/>
            <person name="Goorha R.M."/>
        </authorList>
    </citation>
    <scope>NUCLEOTIDE SEQUENCE [MRNA] (ISOFORM 1)</scope>
</reference>
<reference key="3">
    <citation type="journal article" date="2004" name="Nature">
        <title>DNA sequence and analysis of human chromosome 9.</title>
        <authorList>
            <person name="Humphray S.J."/>
            <person name="Oliver K."/>
            <person name="Hunt A.R."/>
            <person name="Plumb R.W."/>
            <person name="Loveland J.E."/>
            <person name="Howe K.L."/>
            <person name="Andrews T.D."/>
            <person name="Searle S."/>
            <person name="Hunt S.E."/>
            <person name="Scott C.E."/>
            <person name="Jones M.C."/>
            <person name="Ainscough R."/>
            <person name="Almeida J.P."/>
            <person name="Ambrose K.D."/>
            <person name="Ashwell R.I.S."/>
            <person name="Babbage A.K."/>
            <person name="Babbage S."/>
            <person name="Bagguley C.L."/>
            <person name="Bailey J."/>
            <person name="Banerjee R."/>
            <person name="Barker D.J."/>
            <person name="Barlow K.F."/>
            <person name="Bates K."/>
            <person name="Beasley H."/>
            <person name="Beasley O."/>
            <person name="Bird C.P."/>
            <person name="Bray-Allen S."/>
            <person name="Brown A.J."/>
            <person name="Brown J.Y."/>
            <person name="Burford D."/>
            <person name="Burrill W."/>
            <person name="Burton J."/>
            <person name="Carder C."/>
            <person name="Carter N.P."/>
            <person name="Chapman J.C."/>
            <person name="Chen Y."/>
            <person name="Clarke G."/>
            <person name="Clark S.Y."/>
            <person name="Clee C.M."/>
            <person name="Clegg S."/>
            <person name="Collier R.E."/>
            <person name="Corby N."/>
            <person name="Crosier M."/>
            <person name="Cummings A.T."/>
            <person name="Davies J."/>
            <person name="Dhami P."/>
            <person name="Dunn M."/>
            <person name="Dutta I."/>
            <person name="Dyer L.W."/>
            <person name="Earthrowl M.E."/>
            <person name="Faulkner L."/>
            <person name="Fleming C.J."/>
            <person name="Frankish A."/>
            <person name="Frankland J.A."/>
            <person name="French L."/>
            <person name="Fricker D.G."/>
            <person name="Garner P."/>
            <person name="Garnett J."/>
            <person name="Ghori J."/>
            <person name="Gilbert J.G.R."/>
            <person name="Glison C."/>
            <person name="Grafham D.V."/>
            <person name="Gribble S."/>
            <person name="Griffiths C."/>
            <person name="Griffiths-Jones S."/>
            <person name="Grocock R."/>
            <person name="Guy J."/>
            <person name="Hall R.E."/>
            <person name="Hammond S."/>
            <person name="Harley J.L."/>
            <person name="Harrison E.S.I."/>
            <person name="Hart E.A."/>
            <person name="Heath P.D."/>
            <person name="Henderson C.D."/>
            <person name="Hopkins B.L."/>
            <person name="Howard P.J."/>
            <person name="Howden P.J."/>
            <person name="Huckle E."/>
            <person name="Johnson C."/>
            <person name="Johnson D."/>
            <person name="Joy A.A."/>
            <person name="Kay M."/>
            <person name="Keenan S."/>
            <person name="Kershaw J.K."/>
            <person name="Kimberley A.M."/>
            <person name="King A."/>
            <person name="Knights A."/>
            <person name="Laird G.K."/>
            <person name="Langford C."/>
            <person name="Lawlor S."/>
            <person name="Leongamornlert D.A."/>
            <person name="Leversha M."/>
            <person name="Lloyd C."/>
            <person name="Lloyd D.M."/>
            <person name="Lovell J."/>
            <person name="Martin S."/>
            <person name="Mashreghi-Mohammadi M."/>
            <person name="Matthews L."/>
            <person name="McLaren S."/>
            <person name="McLay K.E."/>
            <person name="McMurray A."/>
            <person name="Milne S."/>
            <person name="Nickerson T."/>
            <person name="Nisbett J."/>
            <person name="Nordsiek G."/>
            <person name="Pearce A.V."/>
            <person name="Peck A.I."/>
            <person name="Porter K.M."/>
            <person name="Pandian R."/>
            <person name="Pelan S."/>
            <person name="Phillimore B."/>
            <person name="Povey S."/>
            <person name="Ramsey Y."/>
            <person name="Rand V."/>
            <person name="Scharfe M."/>
            <person name="Sehra H.K."/>
            <person name="Shownkeen R."/>
            <person name="Sims S.K."/>
            <person name="Skuce C.D."/>
            <person name="Smith M."/>
            <person name="Steward C.A."/>
            <person name="Swarbreck D."/>
            <person name="Sycamore N."/>
            <person name="Tester J."/>
            <person name="Thorpe A."/>
            <person name="Tracey A."/>
            <person name="Tromans A."/>
            <person name="Thomas D.W."/>
            <person name="Wall M."/>
            <person name="Wallis J.M."/>
            <person name="West A.P."/>
            <person name="Whitehead S.L."/>
            <person name="Willey D.L."/>
            <person name="Williams S.A."/>
            <person name="Wilming L."/>
            <person name="Wray P.W."/>
            <person name="Young L."/>
            <person name="Ashurst J.L."/>
            <person name="Coulson A."/>
            <person name="Blocker H."/>
            <person name="Durbin R.M."/>
            <person name="Sulston J.E."/>
            <person name="Hubbard T."/>
            <person name="Jackson M.J."/>
            <person name="Bentley D.R."/>
            <person name="Beck S."/>
            <person name="Rogers J."/>
            <person name="Dunham I."/>
        </authorList>
    </citation>
    <scope>NUCLEOTIDE SEQUENCE [LARGE SCALE GENOMIC DNA]</scope>
</reference>
<reference key="4">
    <citation type="journal article" date="2004" name="Genome Res.">
        <title>The status, quality, and expansion of the NIH full-length cDNA project: the Mammalian Gene Collection (MGC).</title>
        <authorList>
            <consortium name="The MGC Project Team"/>
        </authorList>
    </citation>
    <scope>NUCLEOTIDE SEQUENCE [LARGE SCALE MRNA] (ISOFORM 2)</scope>
    <source>
        <tissue>Brain</tissue>
    </source>
</reference>
<reference key="5">
    <citation type="journal article" date="2007" name="BMC Genomics">
        <title>The full-ORF clone resource of the German cDNA consortium.</title>
        <authorList>
            <person name="Bechtel S."/>
            <person name="Rosenfelder H."/>
            <person name="Duda A."/>
            <person name="Schmidt C.P."/>
            <person name="Ernst U."/>
            <person name="Wellenreuther R."/>
            <person name="Mehrle A."/>
            <person name="Schuster C."/>
            <person name="Bahr A."/>
            <person name="Bloecker H."/>
            <person name="Heubner D."/>
            <person name="Hoerlein A."/>
            <person name="Michel G."/>
            <person name="Wedler H."/>
            <person name="Koehrer K."/>
            <person name="Ottenwaelder B."/>
            <person name="Poustka A."/>
            <person name="Wiemann S."/>
            <person name="Schupp I."/>
        </authorList>
    </citation>
    <scope>NUCLEOTIDE SEQUENCE [LARGE SCALE MRNA] OF 636-802 (ISOFORM 1)</scope>
    <source>
        <tissue>Testis</tissue>
    </source>
</reference>
<reference key="6">
    <citation type="journal article" date="2004" name="Biochem. Biophys. Res. Commun.">
        <title>NIRF induces G1 arrest and associates with Cdk2.</title>
        <authorList>
            <person name="Li Y."/>
            <person name="Mori T."/>
            <person name="Hata H."/>
            <person name="Homma Y."/>
            <person name="Kochi H."/>
        </authorList>
    </citation>
    <scope>FUNCTION IN CELL CYCLE</scope>
    <scope>PHOSPHORYLATION</scope>
</reference>
<reference key="7">
    <citation type="journal article" date="2004" name="FEBS Lett.">
        <title>NIRF is a ubiquitin ligase that is capable of ubiquitinating PCNP, a PEST-containing nuclear protein.</title>
        <authorList>
            <person name="Mori T."/>
            <person name="Li Y."/>
            <person name="Hata H."/>
            <person name="Kochi H."/>
        </authorList>
    </citation>
    <scope>UBIQUITINATION</scope>
    <scope>INTERACTION WITH PCNP</scope>
    <scope>FUNCTION</scope>
</reference>
<reference key="8">
    <citation type="journal article" date="2004" name="Oncogene">
        <title>ICBP90, an E2F-1 target, recruits HDAC1 and binds to methyl-CpG through its SRA domain.</title>
        <authorList>
            <person name="Unoki M."/>
            <person name="Nishidate T."/>
            <person name="Nakamura Y."/>
        </authorList>
    </citation>
    <scope>FUNCTION</scope>
    <scope>INTERACTION WITH HDAC1</scope>
</reference>
<reference key="9">
    <citation type="journal article" date="2008" name="Proc. Natl. Acad. Sci. U.S.A.">
        <title>A quantitative atlas of mitotic phosphorylation.</title>
        <authorList>
            <person name="Dephoure N."/>
            <person name="Zhou C."/>
            <person name="Villen J."/>
            <person name="Beausoleil S.A."/>
            <person name="Bakalarski C.E."/>
            <person name="Elledge S.J."/>
            <person name="Gygi S.P."/>
        </authorList>
    </citation>
    <scope>PHOSPHORYLATION [LARGE SCALE ANALYSIS] AT SER-667</scope>
    <scope>IDENTIFICATION BY MASS SPECTROMETRY [LARGE SCALE ANALYSIS]</scope>
    <source>
        <tissue>Cervix carcinoma</tissue>
    </source>
</reference>
<reference key="10">
    <citation type="journal article" date="2011" name="BMC Syst. Biol.">
        <title>Initial characterization of the human central proteome.</title>
        <authorList>
            <person name="Burkard T.R."/>
            <person name="Planyavsky M."/>
            <person name="Kaupe I."/>
            <person name="Breitwieser F.P."/>
            <person name="Buerckstuemmer T."/>
            <person name="Bennett K.L."/>
            <person name="Superti-Furga G."/>
            <person name="Colinge J."/>
        </authorList>
    </citation>
    <scope>IDENTIFICATION BY MASS SPECTROMETRY [LARGE SCALE ANALYSIS]</scope>
</reference>
<reference key="11">
    <citation type="journal article" date="2011" name="Cell Cycle">
        <title>NIRF constitutes a nodal point in the cell cycle network and is a candidate tumor suppressor.</title>
        <authorList>
            <person name="Mori T."/>
            <person name="Ikeda D.D."/>
            <person name="Fukushima T."/>
            <person name="Takenoshita S."/>
            <person name="Kochi H."/>
        </authorList>
    </citation>
    <scope>FUNCTION</scope>
    <scope>INTERACTION WITH CCDN1; CCNE1; TP53 AND RB1</scope>
    <scope>ASSOCIATION WITH TUMORIGENESIS</scope>
</reference>
<reference key="12">
    <citation type="journal article" date="2013" name="J. Biol. Chem.">
        <title>UHRF2, a ubiquitin E3 ligase, acts as a small ubiquitin-like modifier E3 ligase for zinc finger protein 131.</title>
        <authorList>
            <person name="Oh Y."/>
            <person name="Chung K.C."/>
        </authorList>
    </citation>
    <scope>FUNCTION</scope>
    <scope>AUTOSUMOYLATION</scope>
    <scope>INTERACTION WITH UBE2I</scope>
    <scope>SUBCELLULAR LOCATION</scope>
    <scope>MUTAGENESIS OF LYS-307; LYS-548 AND CYS-735</scope>
</reference>
<reference key="13">
    <citation type="journal article" date="2013" name="J. Proteome Res.">
        <title>Toward a comprehensive characterization of a human cancer cell phosphoproteome.</title>
        <authorList>
            <person name="Zhou H."/>
            <person name="Di Palma S."/>
            <person name="Preisinger C."/>
            <person name="Peng M."/>
            <person name="Polat A.N."/>
            <person name="Heck A.J."/>
            <person name="Mohammed S."/>
        </authorList>
    </citation>
    <scope>IDENTIFICATION BY MASS SPECTROMETRY [LARGE SCALE ANALYSIS]</scope>
    <source>
        <tissue>Cervix carcinoma</tissue>
    </source>
</reference>
<reference key="14">
    <citation type="journal article" date="2016" name="J. Biol. Chem.">
        <title>Zinc Finger Protein 618 Regulates the Function of UHRF2 (Ubiquitin-like with PHD and Ring Finger Domains 2) as a Specific 5-Hydroxymethylcytosine Reader.</title>
        <authorList>
            <person name="Liu Y."/>
            <person name="Zhang B."/>
            <person name="Kuang H."/>
            <person name="Korakavi G."/>
            <person name="Lu L.Y."/>
            <person name="Yu X."/>
        </authorList>
    </citation>
    <scope>FUNCTION</scope>
    <scope>INTERACTION WITH ZNF618</scope>
    <scope>SUBCELLULAR LOCATION</scope>
</reference>
<reference key="15">
    <citation type="journal article" date="2017" name="Protein Cell">
        <title>E3 ligase UHRF2 stabilizes the acetyltransferase TIP60 and regulates H3K9ac and H3K14ac via RING finger domain.</title>
        <authorList>
            <person name="Zeng S."/>
            <person name="Wang Y."/>
            <person name="Zhang T."/>
            <person name="Bai L."/>
            <person name="Wang Y."/>
            <person name="Duan C."/>
        </authorList>
    </citation>
    <scope>FUNCTION</scope>
    <scope>SUBCELLULAR LOCATION</scope>
</reference>
<reference key="16">
    <citation type="journal article" date="2018" name="Nucleic Acids Res.">
        <title>Comparative biochemical analysis of UHRF proteins reveals molecular mechanisms that uncouple UHRF2 from DNA methylation maintenance.</title>
        <authorList>
            <person name="Vaughan R.M."/>
            <person name="Dickson B.M."/>
            <person name="Cornett E.M."/>
            <person name="Harrison J.S."/>
            <person name="Kuhlman B."/>
            <person name="Rothbart S.B."/>
        </authorList>
    </citation>
    <scope>FUNCTION</scope>
    <scope>ACTIVITY REGULATION</scope>
</reference>
<reference key="17">
    <citation type="journal article" date="2018" name="Biotechnol. Lett.">
        <title>UHRF2 promotes DNA damage response by decreasing p21 via RING finger domain.</title>
        <authorList>
            <person name="Wang Y."/>
            <person name="Yan X."/>
            <person name="Zeng S."/>
            <person name="Zhang T."/>
            <person name="Cheng F."/>
            <person name="Chen R."/>
            <person name="Duan C."/>
        </authorList>
    </citation>
    <scope>FUNCTION</scope>
    <scope>SUBCELLULAR LOCATION</scope>
    <scope>CATALYTIC ACTIVITY</scope>
</reference>
<reference key="18">
    <citation type="journal article" date="2018" name="PLoS Genet.">
        <title>Identification of UHRF2 as a novel DNA interstrand crosslink sensor protein.</title>
        <authorList>
            <person name="Motnenko A."/>
            <person name="Liang C.C."/>
            <person name="Yang D."/>
            <person name="Lopez-Martinez D."/>
            <person name="Yoshikawa Y."/>
            <person name="Zhan B."/>
            <person name="Ward K.E."/>
            <person name="Tian J."/>
            <person name="Haas W."/>
            <person name="Spingardi P."/>
            <person name="Kessler B.M."/>
            <person name="Kriaucionis S."/>
            <person name="Gygi S.P."/>
            <person name="Cohn M.A."/>
        </authorList>
    </citation>
    <scope>FUNCTION</scope>
    <scope>INTERACTION WITH UHRF1 AND FANCD2</scope>
    <scope>SUBCELLULAR LOCATION</scope>
</reference>
<reference key="19">
    <citation type="journal article" date="2021" name="Genes Cells">
        <title>UV-induced activation of ATR is mediated by UHRF2.</title>
        <authorList>
            <person name="Hanaki S."/>
            <person name="Habara M."/>
            <person name="Shimada M."/>
        </authorList>
    </citation>
    <scope>FUNCTION</scope>
    <scope>INTERACTION WITH ATR</scope>
</reference>
<reference key="20">
    <citation type="submission" date="2005-08" db="PDB data bank">
        <title>Solution structure of the N-terminal ubiquitin-like domain in human NP95/ICBP90-like RING finger protein (NIRF).</title>
        <authorList>
            <consortium name="RIKEN structural genomics initiative (RSGI)"/>
        </authorList>
    </citation>
    <scope>STRUCTURE BY NMR OF 1-76</scope>
</reference>
<reference key="21">
    <citation type="submission" date="2006-01" db="PDB data bank">
        <title>2.1 Angstrom crystal structure of the human ubiquitin ligase NIRF.</title>
        <authorList>
            <consortium name="Structural genomics consortium (SGC)"/>
        </authorList>
    </citation>
    <scope>X-RAY CRYSTALLOGRAPHY (2.1 ANGSTROMS) OF 672-802 IN COMPLEX WITH ZINC IONS</scope>
</reference>
<reference key="22">
    <citation type="submission" date="2009-02" db="PDB data bank">
        <title>2.1 Angstrom crystal structure of the human ubiquitin ligase NIRF.</title>
        <authorList>
            <consortium name="Structural genomics consortium (SGC)"/>
        </authorList>
    </citation>
    <scope>X-RAY CRYSTALLOGRAPHY (2.1 ANGSTROMS) OF 672-802</scope>
    <scope>SUBUNIT</scope>
    <scope>DISULFIDE BOND</scope>
</reference>
<reference evidence="27 28 29" key="23">
    <citation type="journal article" date="2014" name="Mol. Cell">
        <title>Structural basis for hydroxymethylcytosine recognition by the SRA domain of UHRF2.</title>
        <authorList>
            <person name="Zhou T."/>
            <person name="Xiong J."/>
            <person name="Wang M."/>
            <person name="Yang N."/>
            <person name="Wong J."/>
            <person name="Zhu B."/>
            <person name="Xu R.M."/>
        </authorList>
    </citation>
    <scope>X-RAY CRYSTALLOGRAPHY (2.00 ANGSTROMS) OF 419-648</scope>
    <scope>HYDROXYMETHYLCYTOSINE-BINDING</scope>
    <scope>FUNCTION</scope>
</reference>
<reference evidence="30" key="24">
    <citation type="journal article" date="2017" name="Biochem. Biophys. Res. Commun.">
        <title>Structure insights into the molecular mechanism of the interaction between UHRF2 and PCNA.</title>
        <authorList>
            <person name="Chen W."/>
            <person name="Wu M."/>
            <person name="Hang T."/>
            <person name="Wang C."/>
            <person name="Zhang X."/>
            <person name="Zang J."/>
        </authorList>
    </citation>
    <scope>X-RAY CRYSTALLOGRAPHY (2.20 ANGSTROMS) OF 784-800</scope>
    <scope>INTERACTION WITH PCNA</scope>
</reference>
<reference key="25">
    <citation type="journal article" date="2006" name="Science">
        <title>The consensus coding sequences of human breast and colorectal cancers.</title>
        <authorList>
            <person name="Sjoeblom T."/>
            <person name="Jones S."/>
            <person name="Wood L.D."/>
            <person name="Parsons D.W."/>
            <person name="Lin J."/>
            <person name="Barber T.D."/>
            <person name="Mandelker D."/>
            <person name="Leary R.J."/>
            <person name="Ptak J."/>
            <person name="Silliman N."/>
            <person name="Szabo S."/>
            <person name="Buckhaults P."/>
            <person name="Farrell C."/>
            <person name="Meeh P."/>
            <person name="Markowitz S.D."/>
            <person name="Willis J."/>
            <person name="Dawson D."/>
            <person name="Willson J.K.V."/>
            <person name="Gazdar A.F."/>
            <person name="Hartigan J."/>
            <person name="Wu L."/>
            <person name="Liu C."/>
            <person name="Parmigiani G."/>
            <person name="Park B.H."/>
            <person name="Bachman K.E."/>
            <person name="Papadopoulos N."/>
            <person name="Vogelstein B."/>
            <person name="Kinzler K.W."/>
            <person name="Velculescu V.E."/>
        </authorList>
    </citation>
    <scope>VARIANT [LARGE SCALE ANALYSIS] ASN-87</scope>
</reference>
<gene>
    <name type="primary">UHRF2</name>
    <name type="synonym">NIRF</name>
    <name type="synonym">RNF107</name>
</gene>
<sequence length="802" mass="89985">MWIQVRTIDGSKTCTIEDVSRKATIEELRERVWALFDVRPECQRLFYRGKQLENGYTLFDYDVGLNDIIQLLVRPDPDHLPGTSTQIEAKPCSNSPPKVKKAPRVGPSNQPSTSARARLIDPGFGIYKVNELVDARDVGLGAWFEAHIHSVTRASDGQSRGKTPLKNGSSCKRTNGNIKHKSKENTNKLDSVPSTSNSDCVAADEDVIYHIQYDEYPESGTLEMNVKDLRPRARTILKWNELNVGDVVMVNYNVESPGQRGFWFDAEITTLKTISRTKKELRVKIFLGGSEGTLNDCKIISVDEIFKIERPGAHPLSFADGKFLRRNDPECDLCGGDPEKKCHSCSCRVCGGKHEPNMQLLCDECNVAYHIYCLNPPLDKVPEEEYWYCPSCKTDSSEVVKAGERLKMSKKKAKMPSASTESRRDWGRGMACVGRTRECTIVPSNHYGPIPGIPVGSTWRFRVQVSEAGVHRPHVGGIHGRSNDGAYSLVLAGGFADEVDRGDEFTYTGSGGKNLAGNKRIGAPSADQTLTNMNRALALNCDAPLDDKIGAESRNWRAGKPVRVIRSFKGRKISKYAPEEGNRYDGIYKVVKYWPEISSSHGFLVWRYLLRRDDVEPAPWTSEGIERSRRLCLRLQYPAGYPSDKEGKKPKGQSKKQPSGTTKRPISDDDCPSASKVYKASDSAEAIEAFQLTPQQQHLIREDCQNQKLWDEVLSHLVEGPNFLKKLEQSFMCVCCQELVYQPVTTECFHNVCKDCLQRSFKAQVFSCPACRHDLGQNYIMIPNEILQTLLDLFFPGYSKGR</sequence>
<accession>Q96PU4</accession>
<accession>Q5VYR1</accession>
<accession>Q5VYR3</accession>
<accession>Q659C8</accession>
<accession>Q8TAG7</accession>
<feature type="chain" id="PRO_0000056147" description="E3 ubiquitin-protein ligase UHRF2">
    <location>
        <begin position="1"/>
        <end position="802"/>
    </location>
</feature>
<feature type="domain" description="Ubiquitin-like" evidence="5">
    <location>
        <begin position="1"/>
        <end position="78"/>
    </location>
</feature>
<feature type="domain" description="YDG" evidence="6">
    <location>
        <begin position="448"/>
        <end position="612"/>
    </location>
</feature>
<feature type="zinc finger region" description="PHD-type" evidence="3">
    <location>
        <begin position="344"/>
        <end position="395"/>
    </location>
</feature>
<feature type="zinc finger region" description="RING-type" evidence="4">
    <location>
        <begin position="733"/>
        <end position="772"/>
    </location>
</feature>
<feature type="region of interest" description="Disordered" evidence="7">
    <location>
        <begin position="80"/>
        <end position="116"/>
    </location>
</feature>
<feature type="region of interest" description="Required for interaction with histone H3" evidence="1">
    <location>
        <begin position="117"/>
        <end position="311"/>
    </location>
</feature>
<feature type="region of interest" description="Disordered" evidence="7">
    <location>
        <begin position="153"/>
        <end position="197"/>
    </location>
</feature>
<feature type="region of interest" description="Interaction with PCNP">
    <location>
        <begin position="194"/>
        <end position="288"/>
    </location>
</feature>
<feature type="region of interest" description="Methyl-CpG binding and interaction with HDAC1" evidence="11">
    <location>
        <begin position="414"/>
        <end position="644"/>
    </location>
</feature>
<feature type="region of interest" description="Disordered" evidence="7">
    <location>
        <begin position="640"/>
        <end position="674"/>
    </location>
</feature>
<feature type="compositionally biased region" description="Polar residues" evidence="7">
    <location>
        <begin position="82"/>
        <end position="96"/>
    </location>
</feature>
<feature type="compositionally biased region" description="Polar residues" evidence="7">
    <location>
        <begin position="153"/>
        <end position="177"/>
    </location>
</feature>
<feature type="compositionally biased region" description="Polar residues" evidence="7">
    <location>
        <begin position="188"/>
        <end position="197"/>
    </location>
</feature>
<feature type="modified residue" description="Phosphoserine" evidence="31">
    <location>
        <position position="667"/>
    </location>
</feature>
<feature type="disulfide bond" description="Interchain" evidence="24">
    <location>
        <position position="704"/>
    </location>
</feature>
<feature type="splice variant" id="VSP_013874" description="In isoform 2." evidence="25">
    <original>DRGD</original>
    <variation>LTEL</variation>
    <location>
        <begin position="500"/>
        <end position="503"/>
    </location>
</feature>
<feature type="splice variant" id="VSP_013875" description="In isoform 2." evidence="25">
    <location>
        <begin position="504"/>
        <end position="802"/>
    </location>
</feature>
<feature type="sequence variant" id="VAR_035961" description="In a colorectal cancer sample; somatic mutation; dbSNP:rs147971931." evidence="12">
    <original>I</original>
    <variation>N</variation>
    <location>
        <position position="87"/>
    </location>
</feature>
<feature type="mutagenesis site" description="No effect on autosumoylation." evidence="14">
    <original>K</original>
    <variation>R</variation>
    <location>
        <position position="307"/>
    </location>
</feature>
<feature type="mutagenesis site" description="No effect on autosumoylation." evidence="14">
    <original>K</original>
    <variation>R</variation>
    <location>
        <position position="548"/>
    </location>
</feature>
<feature type="mutagenesis site" description="No effect on autosumoylation, nor on ZNF131 sumoylation." evidence="14">
    <original>C</original>
    <variation>S</variation>
    <location>
        <position position="735"/>
    </location>
</feature>
<feature type="sequence conflict" description="In Ref. 4; AAH28397." evidence="26" ref="4">
    <original>L</original>
    <variation>M</variation>
    <location>
        <position position="287"/>
    </location>
</feature>
<feature type="sequence conflict" description="In Ref. 4; AAH28397." evidence="26" ref="4">
    <original>P</original>
    <variation>T</variation>
    <location>
        <position position="329"/>
    </location>
</feature>
<feature type="sequence conflict" description="In Ref. 4; AAH28397." evidence="26" ref="4">
    <original>P</original>
    <variation>Q</variation>
    <location>
        <position position="416"/>
    </location>
</feature>
<feature type="strand" evidence="32">
    <location>
        <begin position="1"/>
        <end position="7"/>
    </location>
</feature>
<feature type="strand" evidence="32">
    <location>
        <begin position="13"/>
        <end position="19"/>
    </location>
</feature>
<feature type="helix" evidence="32">
    <location>
        <begin position="25"/>
        <end position="35"/>
    </location>
</feature>
<feature type="turn" evidence="32">
    <location>
        <begin position="40"/>
        <end position="42"/>
    </location>
</feature>
<feature type="strand" evidence="32">
    <location>
        <begin position="43"/>
        <end position="47"/>
    </location>
</feature>
<feature type="strand" evidence="32">
    <location>
        <begin position="54"/>
        <end position="57"/>
    </location>
</feature>
<feature type="helix" evidence="32">
    <location>
        <begin position="58"/>
        <end position="61"/>
    </location>
</feature>
<feature type="strand" evidence="32">
    <location>
        <begin position="68"/>
        <end position="73"/>
    </location>
</feature>
<feature type="strand" evidence="35">
    <location>
        <begin position="132"/>
        <end position="136"/>
    </location>
</feature>
<feature type="turn" evidence="35">
    <location>
        <begin position="138"/>
        <end position="140"/>
    </location>
</feature>
<feature type="strand" evidence="35">
    <location>
        <begin position="143"/>
        <end position="153"/>
    </location>
</feature>
<feature type="strand" evidence="35">
    <location>
        <begin position="206"/>
        <end position="213"/>
    </location>
</feature>
<feature type="helix" evidence="35">
    <location>
        <begin position="217"/>
        <end position="219"/>
    </location>
</feature>
<feature type="strand" evidence="35">
    <location>
        <begin position="222"/>
        <end position="224"/>
    </location>
</feature>
<feature type="helix" evidence="35">
    <location>
        <begin position="226"/>
        <end position="228"/>
    </location>
</feature>
<feature type="strand" evidence="35">
    <location>
        <begin position="229"/>
        <end position="231"/>
    </location>
</feature>
<feature type="helix" evidence="35">
    <location>
        <begin position="239"/>
        <end position="241"/>
    </location>
</feature>
<feature type="strand" evidence="35">
    <location>
        <begin position="247"/>
        <end position="252"/>
    </location>
</feature>
<feature type="strand" evidence="35">
    <location>
        <begin position="262"/>
        <end position="273"/>
    </location>
</feature>
<feature type="strand" evidence="35">
    <location>
        <begin position="275"/>
        <end position="277"/>
    </location>
</feature>
<feature type="strand" evidence="35">
    <location>
        <begin position="279"/>
        <end position="286"/>
    </location>
</feature>
<feature type="strand" evidence="35">
    <location>
        <begin position="293"/>
        <end position="298"/>
    </location>
</feature>
<feature type="turn" evidence="35">
    <location>
        <begin position="318"/>
        <end position="320"/>
    </location>
</feature>
<feature type="turn" evidence="35">
    <location>
        <begin position="332"/>
        <end position="336"/>
    </location>
</feature>
<feature type="strand" evidence="35">
    <location>
        <begin position="338"/>
        <end position="340"/>
    </location>
</feature>
<feature type="turn" evidence="35">
    <location>
        <begin position="343"/>
        <end position="345"/>
    </location>
</feature>
<feature type="turn" evidence="35">
    <location>
        <begin position="348"/>
        <end position="350"/>
    </location>
</feature>
<feature type="strand" evidence="35">
    <location>
        <begin position="356"/>
        <end position="360"/>
    </location>
</feature>
<feature type="strand" evidence="35">
    <location>
        <begin position="363"/>
        <end position="365"/>
    </location>
</feature>
<feature type="strand" evidence="35">
    <location>
        <begin position="368"/>
        <end position="370"/>
    </location>
</feature>
<feature type="turn" evidence="35">
    <location>
        <begin position="371"/>
        <end position="373"/>
    </location>
</feature>
<feature type="strand" evidence="35">
    <location>
        <begin position="374"/>
        <end position="376"/>
    </location>
</feature>
<feature type="turn" evidence="35">
    <location>
        <begin position="390"/>
        <end position="392"/>
    </location>
</feature>
<feature type="strand" evidence="34">
    <location>
        <begin position="458"/>
        <end position="461"/>
    </location>
</feature>
<feature type="helix" evidence="34">
    <location>
        <begin position="462"/>
        <end position="467"/>
    </location>
</feature>
<feature type="strand" evidence="34">
    <location>
        <begin position="477"/>
        <end position="481"/>
    </location>
</feature>
<feature type="turn" evidence="34">
    <location>
        <begin position="482"/>
        <end position="484"/>
    </location>
</feature>
<feature type="strand" evidence="34">
    <location>
        <begin position="485"/>
        <end position="491"/>
    </location>
</feature>
<feature type="strand" evidence="34">
    <location>
        <begin position="502"/>
        <end position="508"/>
    </location>
</feature>
<feature type="helix" evidence="34">
    <location>
        <begin position="532"/>
        <end position="539"/>
    </location>
</feature>
<feature type="strand" evidence="34">
    <location>
        <begin position="541"/>
        <end position="543"/>
    </location>
</feature>
<feature type="turn" evidence="34">
    <location>
        <begin position="547"/>
        <end position="549"/>
    </location>
</feature>
<feature type="helix" evidence="34">
    <location>
        <begin position="556"/>
        <end position="558"/>
    </location>
</feature>
<feature type="strand" evidence="34">
    <location>
        <begin position="562"/>
        <end position="567"/>
    </location>
</feature>
<feature type="helix" evidence="34">
    <location>
        <begin position="568"/>
        <end position="572"/>
    </location>
</feature>
<feature type="strand" evidence="34">
    <location>
        <begin position="575"/>
        <end position="577"/>
    </location>
</feature>
<feature type="strand" evidence="34">
    <location>
        <begin position="579"/>
        <end position="597"/>
    </location>
</feature>
<feature type="turn" evidence="34">
    <location>
        <begin position="599"/>
        <end position="601"/>
    </location>
</feature>
<feature type="strand" evidence="34">
    <location>
        <begin position="602"/>
        <end position="612"/>
    </location>
</feature>
<feature type="helix" evidence="34">
    <location>
        <begin position="622"/>
        <end position="630"/>
    </location>
</feature>
<feature type="helix" evidence="33">
    <location>
        <begin position="694"/>
        <end position="702"/>
    </location>
</feature>
<feature type="helix" evidence="33">
    <location>
        <begin position="704"/>
        <end position="706"/>
    </location>
</feature>
<feature type="helix" evidence="33">
    <location>
        <begin position="707"/>
        <end position="713"/>
    </location>
</feature>
<feature type="helix" evidence="33">
    <location>
        <begin position="714"/>
        <end position="722"/>
    </location>
</feature>
<feature type="helix" evidence="33">
    <location>
        <begin position="723"/>
        <end position="730"/>
    </location>
</feature>
<feature type="turn" evidence="33">
    <location>
        <begin position="734"/>
        <end position="736"/>
    </location>
</feature>
<feature type="strand" evidence="33">
    <location>
        <begin position="737"/>
        <end position="739"/>
    </location>
</feature>
<feature type="strand" evidence="33">
    <location>
        <begin position="741"/>
        <end position="745"/>
    </location>
</feature>
<feature type="strand" evidence="33">
    <location>
        <begin position="751"/>
        <end position="753"/>
    </location>
</feature>
<feature type="helix" evidence="33">
    <location>
        <begin position="754"/>
        <end position="762"/>
    </location>
</feature>
<feature type="turn" evidence="33">
    <location>
        <begin position="769"/>
        <end position="771"/>
    </location>
</feature>
<feature type="helix" evidence="33">
    <location>
        <begin position="785"/>
        <end position="794"/>
    </location>
</feature>
<feature type="turn" evidence="33">
    <location>
        <begin position="796"/>
        <end position="801"/>
    </location>
</feature>
<name>UHRF2_HUMAN</name>
<comment type="function">
    <text evidence="2 8 9 10 11 13 14 15 16 17 19 20 21 22">E3 ubiquitin ligase that plays important roles in DNA methylation, histone modifications, cell cycle and DNA repair (PubMed:15178429, PubMed:23404503, PubMed:27743347, PubMed:29506131). Acts as a specific reader for 5-hydroxymethylcytosine (5hmC) and thereby recruits various substrates to these sites to ubiquitinate them (PubMed:24813944, PubMed:27129234). This activity also allows the maintenance of 5mC levels at specific genomic loci and regulates neuron-related gene expression (By similarity). Participates in cell cycle regulation by ubiquitinating cyclins CCND1 and CCNE1 and thereby inducing G1 arrest (PubMed:15178429, PubMed:15361834, PubMed:21952639). Also ubiquitinates PCNP leading to its degradation by the proteasome (PubMed:12176013, PubMed:14741369). Plays an active role in DNA damage repair by ubiquitinating p21/CDKN1A leading to its proteasomal degradation (PubMed:29923055). Also promotes DNA repair by acting as an interstrand cross-links (ICLs) sensor. Mechanistically, cooperates with UHRF1 to ensure recruitment of FANCD2 to ICLs, leading to FANCD2 monoubiquitination and subsequent activation (PubMed:30335751). Contributes to UV-induced DNA damage response by physically interacting with ATR in response to irradiation, thereby promoting ATR activation (PubMed:33848395).</text>
</comment>
<comment type="catalytic activity">
    <reaction evidence="20">
        <text>S-ubiquitinyl-[E2 ubiquitin-conjugating enzyme]-L-cysteine + [acceptor protein]-L-lysine = [E2 ubiquitin-conjugating enzyme]-L-cysteine + N(6)-ubiquitinyl-[acceptor protein]-L-lysine.</text>
        <dbReference type="EC" id="2.3.2.27"/>
    </reaction>
</comment>
<comment type="activity regulation">
    <text evidence="19">E3 ligase activity is robustly activated by 5-hydroxymethylcytosine.</text>
</comment>
<comment type="pathway">
    <text>Protein modification; protein ubiquitination.</text>
</comment>
<comment type="subunit">
    <text evidence="1 8 9 11 13 14 16 18 21 22 23 24">Homodimer; disulfide-linked. Binds methylated CpG containing oligonucleotides. Interacts with H3; the interaction has a preference for the 'Lys-9' trimethylated form of H3 (H3K9me3) (By similarity). Interacts with PCNP (PubMed:12176013, PubMed:14741369). Interacts with HDAC1 (PubMed:15361834). Interacts directly with CCNE1; the interaction ubiquitinates CCNE1 and appears independent of CCNE1 phosphorylation (PubMed:21952639). Interacts with CCND1; the interaction ubiquitinates CCND1 and appears independent of CCND1 phosphorylation (PubMed:21952639). Interacts with p53/TP53 and RB1 (PubMed:21952639). Interacts with UBE2I (PubMed:23404503). Interacts with ZNF618 (PubMed:27129234). Interacts with UHRF1 (PubMed:30335751). Interacts with FANCD2 (PubMed:30335751). Interacts with ATR (PubMed:33848395). Interacts with PCNA (PubMed:28951215).</text>
</comment>
<comment type="interaction">
    <interactant intactId="EBI-625304">
        <id>Q96PU4</id>
    </interactant>
    <interactant intactId="EBI-457097">
        <id>P20248</id>
        <label>CCNA2</label>
    </interactant>
    <organismsDiffer>false</organismsDiffer>
    <experiments>2</experiments>
</comment>
<comment type="interaction">
    <interactant intactId="EBI-625304">
        <id>Q96PU4</id>
    </interactant>
    <interactant intactId="EBI-495332">
        <id>P14635</id>
        <label>CCNB1</label>
    </interactant>
    <organismsDiffer>false</organismsDiffer>
    <experiments>2</experiments>
</comment>
<comment type="interaction">
    <interactant intactId="EBI-625304">
        <id>Q96PU4</id>
    </interactant>
    <interactant intactId="EBI-375001">
        <id>P24385</id>
        <label>CCND1</label>
    </interactant>
    <organismsDiffer>false</organismsDiffer>
    <experiments>4</experiments>
</comment>
<comment type="interaction">
    <interactant intactId="EBI-625304">
        <id>Q96PU4</id>
    </interactant>
    <interactant intactId="EBI-519526">
        <id>P24864</id>
        <label>CCNE1</label>
    </interactant>
    <organismsDiffer>false</organismsDiffer>
    <experiments>4</experiments>
</comment>
<comment type="interaction">
    <interactant intactId="EBI-625304">
        <id>Q96PU4</id>
    </interactant>
    <interactant intactId="EBI-375096">
        <id>P24941</id>
        <label>CDK2</label>
    </interactant>
    <organismsDiffer>false</organismsDiffer>
    <experiments>5</experiments>
</comment>
<comment type="interaction">
    <interactant intactId="EBI-625304">
        <id>Q96PU4</id>
    </interactant>
    <interactant intactId="EBI-491274">
        <id>P06400</id>
        <label>RB1</label>
    </interactant>
    <organismsDiffer>false</organismsDiffer>
    <experiments>4</experiments>
</comment>
<comment type="interaction">
    <interactant intactId="EBI-625304">
        <id>Q96PU4</id>
    </interactant>
    <interactant intactId="EBI-366083">
        <id>P04637</id>
        <label>TP53</label>
    </interactant>
    <organismsDiffer>false</organismsDiffer>
    <experiments>3</experiments>
</comment>
<comment type="interaction">
    <interactant intactId="EBI-12878912">
        <id>Q96PU4-2</id>
    </interactant>
    <interactant intactId="EBI-2806959">
        <id>Q6ICB0</id>
        <label>DESI1</label>
    </interactant>
    <organismsDiffer>false</organismsDiffer>
    <experiments>3</experiments>
</comment>
<comment type="interaction">
    <interactant intactId="EBI-12878912">
        <id>Q96PU4-2</id>
    </interactant>
    <interactant intactId="EBI-11741890">
        <id>Q86VK4-3</id>
        <label>ZNF410</label>
    </interactant>
    <organismsDiffer>false</organismsDiffer>
    <experiments>3</experiments>
</comment>
<comment type="subcellular location">
    <subcellularLocation>
        <location evidence="6 8 14 16 17 20 21">Nucleus</location>
    </subcellularLocation>
    <subcellularLocation>
        <location evidence="16">Chromosome</location>
    </subcellularLocation>
    <text evidence="16">Enriched at genomic loci that are enriched for 5-hydroxymethylcytosine (5hmC).</text>
</comment>
<comment type="alternative products">
    <event type="alternative splicing"/>
    <isoform>
        <id>Q96PU4-1</id>
        <name>1</name>
        <sequence type="displayed"/>
    </isoform>
    <isoform>
        <id>Q96PU4-2</id>
        <name>2</name>
        <name>a</name>
        <sequence type="described" ref="VSP_013874 VSP_013875"/>
    </isoform>
</comment>
<comment type="induction">
    <text evidence="8">Up-regulated in proliferating fetal lung fibroblasts and in U-937 myeloid leukemia cells. Down-regulated in these cells by growth arrest and differentiation. In other cell types which cannot leave the cell cycle, such as tumoral HT-1080 and Hep-G2, levels are consistently up-regulated.</text>
</comment>
<comment type="domain">
    <text evidence="15">The YDG domain recognizes and binds 5-hydroxymethylcytosine (5hmC).</text>
</comment>
<comment type="PTM">
    <text evidence="9">May be autoubiquitinated; which may lead to proteasomal degradation.</text>
</comment>
<comment type="PTM">
    <text evidence="10">Phosphorylated. Phosphorylation may be mediated by CDK2.</text>
</comment>
<comment type="PTM">
    <text>Autosumoylated.</text>
</comment>
<comment type="disease">
    <text>Associated with various cancers. DNA copy number loss is found in multiple kinds of malignancies originating from the brain, breast, stomach, kidney, hematopoietic tissue and lung.</text>
</comment>